<accession>A4XWT5</accession>
<reference key="1">
    <citation type="submission" date="2007-04" db="EMBL/GenBank/DDBJ databases">
        <title>Complete sequence of Pseudomonas mendocina ymp.</title>
        <authorList>
            <consortium name="US DOE Joint Genome Institute"/>
            <person name="Copeland A."/>
            <person name="Lucas S."/>
            <person name="Lapidus A."/>
            <person name="Barry K."/>
            <person name="Glavina del Rio T."/>
            <person name="Dalin E."/>
            <person name="Tice H."/>
            <person name="Pitluck S."/>
            <person name="Kiss H."/>
            <person name="Brettin T."/>
            <person name="Detter J.C."/>
            <person name="Bruce D."/>
            <person name="Han C."/>
            <person name="Schmutz J."/>
            <person name="Larimer F."/>
            <person name="Land M."/>
            <person name="Hauser L."/>
            <person name="Kyrpides N."/>
            <person name="Mikhailova N."/>
            <person name="Hersman L."/>
            <person name="Dubois J."/>
            <person name="Maurice P."/>
            <person name="Richardson P."/>
        </authorList>
    </citation>
    <scope>NUCLEOTIDE SEQUENCE [LARGE SCALE GENOMIC DNA]</scope>
    <source>
        <strain>ymp</strain>
    </source>
</reference>
<evidence type="ECO:0000255" key="1">
    <source>
        <dbReference type="HAMAP-Rule" id="MF_00183"/>
    </source>
</evidence>
<feature type="chain" id="PRO_1000020291" description="1-deoxy-D-xylulose 5-phosphate reductoisomerase">
    <location>
        <begin position="1"/>
        <end position="394"/>
    </location>
</feature>
<feature type="binding site" evidence="1">
    <location>
        <position position="13"/>
    </location>
    <ligand>
        <name>NADPH</name>
        <dbReference type="ChEBI" id="CHEBI:57783"/>
    </ligand>
</feature>
<feature type="binding site" evidence="1">
    <location>
        <position position="14"/>
    </location>
    <ligand>
        <name>NADPH</name>
        <dbReference type="ChEBI" id="CHEBI:57783"/>
    </ligand>
</feature>
<feature type="binding site" evidence="1">
    <location>
        <position position="15"/>
    </location>
    <ligand>
        <name>NADPH</name>
        <dbReference type="ChEBI" id="CHEBI:57783"/>
    </ligand>
</feature>
<feature type="binding site" evidence="1">
    <location>
        <position position="16"/>
    </location>
    <ligand>
        <name>NADPH</name>
        <dbReference type="ChEBI" id="CHEBI:57783"/>
    </ligand>
</feature>
<feature type="binding site" evidence="1">
    <location>
        <position position="127"/>
    </location>
    <ligand>
        <name>NADPH</name>
        <dbReference type="ChEBI" id="CHEBI:57783"/>
    </ligand>
</feature>
<feature type="binding site" evidence="1">
    <location>
        <position position="128"/>
    </location>
    <ligand>
        <name>1-deoxy-D-xylulose 5-phosphate</name>
        <dbReference type="ChEBI" id="CHEBI:57792"/>
    </ligand>
</feature>
<feature type="binding site" evidence="1">
    <location>
        <position position="129"/>
    </location>
    <ligand>
        <name>NADPH</name>
        <dbReference type="ChEBI" id="CHEBI:57783"/>
    </ligand>
</feature>
<feature type="binding site" evidence="1">
    <location>
        <position position="153"/>
    </location>
    <ligand>
        <name>Mn(2+)</name>
        <dbReference type="ChEBI" id="CHEBI:29035"/>
    </ligand>
</feature>
<feature type="binding site" evidence="1">
    <location>
        <position position="154"/>
    </location>
    <ligand>
        <name>1-deoxy-D-xylulose 5-phosphate</name>
        <dbReference type="ChEBI" id="CHEBI:57792"/>
    </ligand>
</feature>
<feature type="binding site" evidence="1">
    <location>
        <position position="155"/>
    </location>
    <ligand>
        <name>1-deoxy-D-xylulose 5-phosphate</name>
        <dbReference type="ChEBI" id="CHEBI:57792"/>
    </ligand>
</feature>
<feature type="binding site" evidence="1">
    <location>
        <position position="155"/>
    </location>
    <ligand>
        <name>Mn(2+)</name>
        <dbReference type="ChEBI" id="CHEBI:29035"/>
    </ligand>
</feature>
<feature type="binding site" evidence="1">
    <location>
        <position position="184"/>
    </location>
    <ligand>
        <name>1-deoxy-D-xylulose 5-phosphate</name>
        <dbReference type="ChEBI" id="CHEBI:57792"/>
    </ligand>
</feature>
<feature type="binding site" evidence="1">
    <location>
        <position position="207"/>
    </location>
    <ligand>
        <name>1-deoxy-D-xylulose 5-phosphate</name>
        <dbReference type="ChEBI" id="CHEBI:57792"/>
    </ligand>
</feature>
<feature type="binding site" evidence="1">
    <location>
        <position position="213"/>
    </location>
    <ligand>
        <name>NADPH</name>
        <dbReference type="ChEBI" id="CHEBI:57783"/>
    </ligand>
</feature>
<feature type="binding site" evidence="1">
    <location>
        <position position="220"/>
    </location>
    <ligand>
        <name>1-deoxy-D-xylulose 5-phosphate</name>
        <dbReference type="ChEBI" id="CHEBI:57792"/>
    </ligand>
</feature>
<feature type="binding site" evidence="1">
    <location>
        <position position="225"/>
    </location>
    <ligand>
        <name>1-deoxy-D-xylulose 5-phosphate</name>
        <dbReference type="ChEBI" id="CHEBI:57792"/>
    </ligand>
</feature>
<feature type="binding site" evidence="1">
    <location>
        <position position="226"/>
    </location>
    <ligand>
        <name>1-deoxy-D-xylulose 5-phosphate</name>
        <dbReference type="ChEBI" id="CHEBI:57792"/>
    </ligand>
</feature>
<feature type="binding site" evidence="1">
    <location>
        <position position="229"/>
    </location>
    <ligand>
        <name>1-deoxy-D-xylulose 5-phosphate</name>
        <dbReference type="ChEBI" id="CHEBI:57792"/>
    </ligand>
</feature>
<feature type="binding site" evidence="1">
    <location>
        <position position="229"/>
    </location>
    <ligand>
        <name>Mn(2+)</name>
        <dbReference type="ChEBI" id="CHEBI:29035"/>
    </ligand>
</feature>
<protein>
    <recommendedName>
        <fullName evidence="1">1-deoxy-D-xylulose 5-phosphate reductoisomerase</fullName>
        <shortName evidence="1">DXP reductoisomerase</shortName>
        <ecNumber evidence="1">1.1.1.267</ecNumber>
    </recommendedName>
    <alternativeName>
        <fullName evidence="1">1-deoxyxylulose-5-phosphate reductoisomerase</fullName>
    </alternativeName>
    <alternativeName>
        <fullName evidence="1">2-C-methyl-D-erythritol 4-phosphate synthase</fullName>
    </alternativeName>
</protein>
<gene>
    <name evidence="1" type="primary">dxr</name>
    <name type="ordered locus">Pmen_3047</name>
</gene>
<dbReference type="EC" id="1.1.1.267" evidence="1"/>
<dbReference type="EMBL" id="CP000680">
    <property type="protein sequence ID" value="ABP85801.1"/>
    <property type="molecule type" value="Genomic_DNA"/>
</dbReference>
<dbReference type="SMR" id="A4XWT5"/>
<dbReference type="STRING" id="399739.Pmen_3047"/>
<dbReference type="KEGG" id="pmy:Pmen_3047"/>
<dbReference type="PATRIC" id="fig|399739.8.peg.3093"/>
<dbReference type="eggNOG" id="COG0743">
    <property type="taxonomic scope" value="Bacteria"/>
</dbReference>
<dbReference type="HOGENOM" id="CLU_035714_0_1_6"/>
<dbReference type="OrthoDB" id="9806546at2"/>
<dbReference type="UniPathway" id="UPA00056">
    <property type="reaction ID" value="UER00092"/>
</dbReference>
<dbReference type="GO" id="GO:0030604">
    <property type="term" value="F:1-deoxy-D-xylulose-5-phosphate reductoisomerase activity"/>
    <property type="evidence" value="ECO:0007669"/>
    <property type="project" value="UniProtKB-UniRule"/>
</dbReference>
<dbReference type="GO" id="GO:0030145">
    <property type="term" value="F:manganese ion binding"/>
    <property type="evidence" value="ECO:0007669"/>
    <property type="project" value="TreeGrafter"/>
</dbReference>
<dbReference type="GO" id="GO:0070402">
    <property type="term" value="F:NADPH binding"/>
    <property type="evidence" value="ECO:0007669"/>
    <property type="project" value="InterPro"/>
</dbReference>
<dbReference type="GO" id="GO:0051484">
    <property type="term" value="P:isopentenyl diphosphate biosynthetic process, methylerythritol 4-phosphate pathway involved in terpenoid biosynthetic process"/>
    <property type="evidence" value="ECO:0007669"/>
    <property type="project" value="TreeGrafter"/>
</dbReference>
<dbReference type="FunFam" id="1.10.1740.10:FF:000004">
    <property type="entry name" value="1-deoxy-D-xylulose 5-phosphate reductoisomerase"/>
    <property type="match status" value="1"/>
</dbReference>
<dbReference type="FunFam" id="3.40.50.720:FF:000045">
    <property type="entry name" value="1-deoxy-D-xylulose 5-phosphate reductoisomerase"/>
    <property type="match status" value="1"/>
</dbReference>
<dbReference type="Gene3D" id="1.10.1740.10">
    <property type="match status" value="1"/>
</dbReference>
<dbReference type="Gene3D" id="3.40.50.720">
    <property type="entry name" value="NAD(P)-binding Rossmann-like Domain"/>
    <property type="match status" value="1"/>
</dbReference>
<dbReference type="HAMAP" id="MF_00183">
    <property type="entry name" value="DXP_reductoisom"/>
    <property type="match status" value="1"/>
</dbReference>
<dbReference type="InterPro" id="IPR003821">
    <property type="entry name" value="DXP_reductoisomerase"/>
</dbReference>
<dbReference type="InterPro" id="IPR013644">
    <property type="entry name" value="DXP_reductoisomerase_C"/>
</dbReference>
<dbReference type="InterPro" id="IPR013512">
    <property type="entry name" value="DXP_reductoisomerase_N"/>
</dbReference>
<dbReference type="InterPro" id="IPR026877">
    <property type="entry name" value="DXPR_C"/>
</dbReference>
<dbReference type="InterPro" id="IPR036169">
    <property type="entry name" value="DXPR_C_sf"/>
</dbReference>
<dbReference type="InterPro" id="IPR036291">
    <property type="entry name" value="NAD(P)-bd_dom_sf"/>
</dbReference>
<dbReference type="NCBIfam" id="TIGR00243">
    <property type="entry name" value="Dxr"/>
    <property type="match status" value="1"/>
</dbReference>
<dbReference type="NCBIfam" id="NF003938">
    <property type="entry name" value="PRK05447.1-1"/>
    <property type="match status" value="1"/>
</dbReference>
<dbReference type="NCBIfam" id="NF009114">
    <property type="entry name" value="PRK12464.1"/>
    <property type="match status" value="1"/>
</dbReference>
<dbReference type="PANTHER" id="PTHR30525">
    <property type="entry name" value="1-DEOXY-D-XYLULOSE 5-PHOSPHATE REDUCTOISOMERASE"/>
    <property type="match status" value="1"/>
</dbReference>
<dbReference type="PANTHER" id="PTHR30525:SF0">
    <property type="entry name" value="1-DEOXY-D-XYLULOSE 5-PHOSPHATE REDUCTOISOMERASE, CHLOROPLASTIC"/>
    <property type="match status" value="1"/>
</dbReference>
<dbReference type="Pfam" id="PF08436">
    <property type="entry name" value="DXP_redisom_C"/>
    <property type="match status" value="1"/>
</dbReference>
<dbReference type="Pfam" id="PF02670">
    <property type="entry name" value="DXP_reductoisom"/>
    <property type="match status" value="1"/>
</dbReference>
<dbReference type="Pfam" id="PF13288">
    <property type="entry name" value="DXPR_C"/>
    <property type="match status" value="1"/>
</dbReference>
<dbReference type="PIRSF" id="PIRSF006205">
    <property type="entry name" value="Dxp_reductismrs"/>
    <property type="match status" value="1"/>
</dbReference>
<dbReference type="SUPFAM" id="SSF69055">
    <property type="entry name" value="1-deoxy-D-xylulose-5-phosphate reductoisomerase, C-terminal domain"/>
    <property type="match status" value="1"/>
</dbReference>
<dbReference type="SUPFAM" id="SSF55347">
    <property type="entry name" value="Glyceraldehyde-3-phosphate dehydrogenase-like, C-terminal domain"/>
    <property type="match status" value="1"/>
</dbReference>
<dbReference type="SUPFAM" id="SSF51735">
    <property type="entry name" value="NAD(P)-binding Rossmann-fold domains"/>
    <property type="match status" value="1"/>
</dbReference>
<sequence length="394" mass="42330">MSTVQQITVLGATGSIGLSTLDVIARHPERYAVFALSGFSRLAELETLCVQHRPRYVVVPDAAAAHALQGSLRAAALPTEVLVGEEGLCAVAGHGEVDCVMAAIVGAAGLRPTLAAVQAGKKVLLANKEALVMSGALFMQAVRESGATLLPIDSEHNAIFQCLPGDYGRGLQAVGVRRVLLTASGGPFRETPLAELERVTPEQACAHPNWSMGRKISVDSASMMNKGLELIEACWLFDARPEQIEVVIHRQSVIHSLVDYVDGSVLAQLGNPDMRTPIAHALAWPQRIDSGVSPLDLFAIGRLDFERPDEQRFPCLRLAREAAQVGGSAPAMLNAANEVAVDAFLQRRIRFSDIARMIEFVLNAESARAVEALDAVFEADRRARALAGEWLARH</sequence>
<name>DXR_ECTM1</name>
<organism>
    <name type="scientific">Ectopseudomonas mendocina (strain ymp)</name>
    <name type="common">Pseudomonas mendocina</name>
    <dbReference type="NCBI Taxonomy" id="399739"/>
    <lineage>
        <taxon>Bacteria</taxon>
        <taxon>Pseudomonadati</taxon>
        <taxon>Pseudomonadota</taxon>
        <taxon>Gammaproteobacteria</taxon>
        <taxon>Pseudomonadales</taxon>
        <taxon>Pseudomonadaceae</taxon>
        <taxon>Ectopseudomonas</taxon>
    </lineage>
</organism>
<keyword id="KW-0414">Isoprene biosynthesis</keyword>
<keyword id="KW-0464">Manganese</keyword>
<keyword id="KW-0479">Metal-binding</keyword>
<keyword id="KW-0521">NADP</keyword>
<keyword id="KW-0560">Oxidoreductase</keyword>
<proteinExistence type="inferred from homology"/>
<comment type="function">
    <text evidence="1">Catalyzes the NADPH-dependent rearrangement and reduction of 1-deoxy-D-xylulose-5-phosphate (DXP) to 2-C-methyl-D-erythritol 4-phosphate (MEP).</text>
</comment>
<comment type="catalytic activity">
    <reaction evidence="1">
        <text>2-C-methyl-D-erythritol 4-phosphate + NADP(+) = 1-deoxy-D-xylulose 5-phosphate + NADPH + H(+)</text>
        <dbReference type="Rhea" id="RHEA:13717"/>
        <dbReference type="ChEBI" id="CHEBI:15378"/>
        <dbReference type="ChEBI" id="CHEBI:57783"/>
        <dbReference type="ChEBI" id="CHEBI:57792"/>
        <dbReference type="ChEBI" id="CHEBI:58262"/>
        <dbReference type="ChEBI" id="CHEBI:58349"/>
        <dbReference type="EC" id="1.1.1.267"/>
    </reaction>
    <physiologicalReaction direction="right-to-left" evidence="1">
        <dbReference type="Rhea" id="RHEA:13719"/>
    </physiologicalReaction>
</comment>
<comment type="cofactor">
    <cofactor evidence="1">
        <name>Mg(2+)</name>
        <dbReference type="ChEBI" id="CHEBI:18420"/>
    </cofactor>
    <cofactor evidence="1">
        <name>Mn(2+)</name>
        <dbReference type="ChEBI" id="CHEBI:29035"/>
    </cofactor>
</comment>
<comment type="pathway">
    <text evidence="1">Isoprenoid biosynthesis; isopentenyl diphosphate biosynthesis via DXP pathway; isopentenyl diphosphate from 1-deoxy-D-xylulose 5-phosphate: step 1/6.</text>
</comment>
<comment type="similarity">
    <text evidence="1">Belongs to the DXR family.</text>
</comment>